<organism>
    <name type="scientific">Solanum lycopersicum</name>
    <name type="common">Tomato</name>
    <name type="synonym">Lycopersicon esculentum</name>
    <dbReference type="NCBI Taxonomy" id="4081"/>
    <lineage>
        <taxon>Eukaryota</taxon>
        <taxon>Viridiplantae</taxon>
        <taxon>Streptophyta</taxon>
        <taxon>Embryophyta</taxon>
        <taxon>Tracheophyta</taxon>
        <taxon>Spermatophyta</taxon>
        <taxon>Magnoliopsida</taxon>
        <taxon>eudicotyledons</taxon>
        <taxon>Gunneridae</taxon>
        <taxon>Pentapetalae</taxon>
        <taxon>asterids</taxon>
        <taxon>lamiids</taxon>
        <taxon>Solanales</taxon>
        <taxon>Solanaceae</taxon>
        <taxon>Solanoideae</taxon>
        <taxon>Solaneae</taxon>
        <taxon>Solanum</taxon>
        <taxon>Solanum subgen. Lycopersicon</taxon>
    </lineage>
</organism>
<protein>
    <recommendedName>
        <fullName>42 kDa cell wall protein</fullName>
    </recommendedName>
</protein>
<accession>P80820</accession>
<sequence>HPVEI</sequence>
<feature type="chain" id="PRO_0000079703" description="42 kDa cell wall protein">
    <location>
        <begin position="1"/>
        <end position="5" status="greater than"/>
    </location>
</feature>
<feature type="non-terminal residue" evidence="2">
    <location>
        <position position="5"/>
    </location>
</feature>
<keyword id="KW-0134">Cell wall</keyword>
<keyword id="KW-0903">Direct protein sequencing</keyword>
<keyword id="KW-1185">Reference proteome</keyword>
<keyword id="KW-0964">Secreted</keyword>
<name>CWP24_SOLLC</name>
<reference evidence="3" key="1">
    <citation type="journal article" date="1997" name="J. Biol. Chem.">
        <title>Differential extraction and protein sequencing reveals major differences in patterns of primary cell wall proteins from plants.</title>
        <authorList>
            <person name="Robertson D."/>
            <person name="Mitchell G.P."/>
            <person name="Gilroy J.S."/>
            <person name="Gerrish C."/>
            <person name="Bolwell G.P."/>
            <person name="Slabas A.R."/>
        </authorList>
    </citation>
    <scope>PROTEIN SEQUENCE</scope>
    <scope>SUBCELLULAR LOCATION</scope>
</reference>
<comment type="subcellular location">
    <subcellularLocation>
        <location evidence="1">Secreted</location>
        <location evidence="1">Cell wall</location>
    </subcellularLocation>
</comment>
<dbReference type="InParanoid" id="P80820"/>
<dbReference type="Proteomes" id="UP000004994">
    <property type="component" value="Unplaced"/>
</dbReference>
<dbReference type="GO" id="GO:0005576">
    <property type="term" value="C:extracellular region"/>
    <property type="evidence" value="ECO:0007669"/>
    <property type="project" value="UniProtKB-KW"/>
</dbReference>
<proteinExistence type="evidence at protein level"/>
<evidence type="ECO:0000269" key="1">
    <source>
    </source>
</evidence>
<evidence type="ECO:0000303" key="2">
    <source>
    </source>
</evidence>
<evidence type="ECO:0000305" key="3"/>